<comment type="similarity">
    <text evidence="1">Belongs to the bacterial ribosomal protein bL35 family.</text>
</comment>
<dbReference type="EMBL" id="CP001029">
    <property type="protein sequence ID" value="ACB79773.1"/>
    <property type="molecule type" value="Genomic_DNA"/>
</dbReference>
<dbReference type="RefSeq" id="WP_009863555.1">
    <property type="nucleotide sequence ID" value="NC_010725.1"/>
</dbReference>
<dbReference type="SMR" id="B1ZGB5"/>
<dbReference type="STRING" id="441620.Mpop_1609"/>
<dbReference type="KEGG" id="mpo:Mpop_1609"/>
<dbReference type="eggNOG" id="COG0291">
    <property type="taxonomic scope" value="Bacteria"/>
</dbReference>
<dbReference type="HOGENOM" id="CLU_169643_2_1_5"/>
<dbReference type="OrthoDB" id="9804851at2"/>
<dbReference type="Proteomes" id="UP000007136">
    <property type="component" value="Chromosome"/>
</dbReference>
<dbReference type="GO" id="GO:0022625">
    <property type="term" value="C:cytosolic large ribosomal subunit"/>
    <property type="evidence" value="ECO:0007669"/>
    <property type="project" value="TreeGrafter"/>
</dbReference>
<dbReference type="GO" id="GO:0003735">
    <property type="term" value="F:structural constituent of ribosome"/>
    <property type="evidence" value="ECO:0007669"/>
    <property type="project" value="InterPro"/>
</dbReference>
<dbReference type="GO" id="GO:0006412">
    <property type="term" value="P:translation"/>
    <property type="evidence" value="ECO:0007669"/>
    <property type="project" value="UniProtKB-UniRule"/>
</dbReference>
<dbReference type="FunFam" id="4.10.410.60:FF:000001">
    <property type="entry name" value="50S ribosomal protein L35"/>
    <property type="match status" value="1"/>
</dbReference>
<dbReference type="Gene3D" id="4.10.410.60">
    <property type="match status" value="1"/>
</dbReference>
<dbReference type="HAMAP" id="MF_00514">
    <property type="entry name" value="Ribosomal_bL35"/>
    <property type="match status" value="1"/>
</dbReference>
<dbReference type="InterPro" id="IPR001706">
    <property type="entry name" value="Ribosomal_bL35"/>
</dbReference>
<dbReference type="InterPro" id="IPR021137">
    <property type="entry name" value="Ribosomal_bL35-like"/>
</dbReference>
<dbReference type="InterPro" id="IPR018265">
    <property type="entry name" value="Ribosomal_bL35_CS"/>
</dbReference>
<dbReference type="InterPro" id="IPR037229">
    <property type="entry name" value="Ribosomal_bL35_sf"/>
</dbReference>
<dbReference type="NCBIfam" id="TIGR00001">
    <property type="entry name" value="rpmI_bact"/>
    <property type="match status" value="1"/>
</dbReference>
<dbReference type="PANTHER" id="PTHR33343">
    <property type="entry name" value="54S RIBOSOMAL PROTEIN BL35M"/>
    <property type="match status" value="1"/>
</dbReference>
<dbReference type="PANTHER" id="PTHR33343:SF1">
    <property type="entry name" value="LARGE RIBOSOMAL SUBUNIT PROTEIN BL35M"/>
    <property type="match status" value="1"/>
</dbReference>
<dbReference type="Pfam" id="PF01632">
    <property type="entry name" value="Ribosomal_L35p"/>
    <property type="match status" value="1"/>
</dbReference>
<dbReference type="PRINTS" id="PR00064">
    <property type="entry name" value="RIBOSOMALL35"/>
</dbReference>
<dbReference type="SUPFAM" id="SSF143034">
    <property type="entry name" value="L35p-like"/>
    <property type="match status" value="1"/>
</dbReference>
<dbReference type="PROSITE" id="PS00936">
    <property type="entry name" value="RIBOSOMAL_L35"/>
    <property type="match status" value="1"/>
</dbReference>
<gene>
    <name evidence="1" type="primary">rpmI</name>
    <name type="ordered locus">Mpop_1609</name>
</gene>
<proteinExistence type="inferred from homology"/>
<accession>B1ZGB5</accession>
<reference key="1">
    <citation type="submission" date="2008-04" db="EMBL/GenBank/DDBJ databases">
        <title>Complete sequence of chromosome of Methylobacterium populi BJ001.</title>
        <authorList>
            <consortium name="US DOE Joint Genome Institute"/>
            <person name="Copeland A."/>
            <person name="Lucas S."/>
            <person name="Lapidus A."/>
            <person name="Glavina del Rio T."/>
            <person name="Dalin E."/>
            <person name="Tice H."/>
            <person name="Bruce D."/>
            <person name="Goodwin L."/>
            <person name="Pitluck S."/>
            <person name="Chertkov O."/>
            <person name="Brettin T."/>
            <person name="Detter J.C."/>
            <person name="Han C."/>
            <person name="Kuske C.R."/>
            <person name="Schmutz J."/>
            <person name="Larimer F."/>
            <person name="Land M."/>
            <person name="Hauser L."/>
            <person name="Kyrpides N."/>
            <person name="Mikhailova N."/>
            <person name="Marx C."/>
            <person name="Richardson P."/>
        </authorList>
    </citation>
    <scope>NUCLEOTIDE SEQUENCE [LARGE SCALE GENOMIC DNA]</scope>
    <source>
        <strain>ATCC BAA-705 / NCIMB 13946 / BJ001</strain>
    </source>
</reference>
<feature type="chain" id="PRO_1000127375" description="Large ribosomal subunit protein bL35">
    <location>
        <begin position="1"/>
        <end position="67"/>
    </location>
</feature>
<protein>
    <recommendedName>
        <fullName evidence="1">Large ribosomal subunit protein bL35</fullName>
    </recommendedName>
    <alternativeName>
        <fullName evidence="2">50S ribosomal protein L35</fullName>
    </alternativeName>
</protein>
<organism>
    <name type="scientific">Methylorubrum populi (strain ATCC BAA-705 / NCIMB 13946 / BJ001)</name>
    <name type="common">Methylobacterium populi</name>
    <dbReference type="NCBI Taxonomy" id="441620"/>
    <lineage>
        <taxon>Bacteria</taxon>
        <taxon>Pseudomonadati</taxon>
        <taxon>Pseudomonadota</taxon>
        <taxon>Alphaproteobacteria</taxon>
        <taxon>Hyphomicrobiales</taxon>
        <taxon>Methylobacteriaceae</taxon>
        <taxon>Methylorubrum</taxon>
    </lineage>
</organism>
<evidence type="ECO:0000255" key="1">
    <source>
        <dbReference type="HAMAP-Rule" id="MF_00514"/>
    </source>
</evidence>
<evidence type="ECO:0000305" key="2"/>
<name>RL35_METPB</name>
<keyword id="KW-0687">Ribonucleoprotein</keyword>
<keyword id="KW-0689">Ribosomal protein</keyword>
<sequence>MPKLKTKSGAKKRFKVTGTGKVVYAQAGKRHGMIKRTNKQIRNLRGTTTLFEGDAANVKKYFLPNQR</sequence>